<proteinExistence type="inferred from homology"/>
<accession>A1W748</accession>
<evidence type="ECO:0000255" key="1">
    <source>
        <dbReference type="HAMAP-Rule" id="MF_01218"/>
    </source>
</evidence>
<protein>
    <recommendedName>
        <fullName evidence="1">Uracil phosphoribosyltransferase</fullName>
        <ecNumber evidence="1">2.4.2.9</ecNumber>
    </recommendedName>
    <alternativeName>
        <fullName evidence="1">UMP pyrophosphorylase</fullName>
    </alternativeName>
    <alternativeName>
        <fullName evidence="1">UPRTase</fullName>
    </alternativeName>
</protein>
<reference key="1">
    <citation type="submission" date="2006-12" db="EMBL/GenBank/DDBJ databases">
        <title>Complete sequence of chromosome 1 of Acidovorax sp. JS42.</title>
        <authorList>
            <person name="Copeland A."/>
            <person name="Lucas S."/>
            <person name="Lapidus A."/>
            <person name="Barry K."/>
            <person name="Detter J.C."/>
            <person name="Glavina del Rio T."/>
            <person name="Dalin E."/>
            <person name="Tice H."/>
            <person name="Pitluck S."/>
            <person name="Chertkov O."/>
            <person name="Brettin T."/>
            <person name="Bruce D."/>
            <person name="Han C."/>
            <person name="Tapia R."/>
            <person name="Gilna P."/>
            <person name="Schmutz J."/>
            <person name="Larimer F."/>
            <person name="Land M."/>
            <person name="Hauser L."/>
            <person name="Kyrpides N."/>
            <person name="Kim E."/>
            <person name="Stahl D."/>
            <person name="Richardson P."/>
        </authorList>
    </citation>
    <scope>NUCLEOTIDE SEQUENCE [LARGE SCALE GENOMIC DNA]</scope>
    <source>
        <strain>JS42</strain>
    </source>
</reference>
<organism>
    <name type="scientific">Acidovorax sp. (strain JS42)</name>
    <dbReference type="NCBI Taxonomy" id="232721"/>
    <lineage>
        <taxon>Bacteria</taxon>
        <taxon>Pseudomonadati</taxon>
        <taxon>Pseudomonadota</taxon>
        <taxon>Betaproteobacteria</taxon>
        <taxon>Burkholderiales</taxon>
        <taxon>Comamonadaceae</taxon>
        <taxon>Acidovorax</taxon>
    </lineage>
</organism>
<keyword id="KW-0021">Allosteric enzyme</keyword>
<keyword id="KW-0328">Glycosyltransferase</keyword>
<keyword id="KW-0342">GTP-binding</keyword>
<keyword id="KW-0460">Magnesium</keyword>
<keyword id="KW-0547">Nucleotide-binding</keyword>
<keyword id="KW-0808">Transferase</keyword>
<name>UPP_ACISJ</name>
<gene>
    <name evidence="1" type="primary">upp</name>
    <name type="ordered locus">Ajs_1893</name>
</gene>
<sequence length="209" mass="22986">MSNVHVIDHPLVQHKLTLMRRKDASTNSFRRLLGELSTLMAYEVTRDMPLQDIQIETPLETMTGKVIDGKKLVLVSILRAGNGFLDGMLNVVPGARIGHIGLYRDPDTLQPVEYYFKMPSEMAERDIIVVDPMLATGNSAAAAVARLKQLQPRSIKFVCLLAAPEGVATLQKAHPDVPIYTAAIDRELNDHGYILPGLGDAGDRIFGTK</sequence>
<comment type="function">
    <text evidence="1">Catalyzes the conversion of uracil and 5-phospho-alpha-D-ribose 1-diphosphate (PRPP) to UMP and diphosphate.</text>
</comment>
<comment type="catalytic activity">
    <reaction evidence="1">
        <text>UMP + diphosphate = 5-phospho-alpha-D-ribose 1-diphosphate + uracil</text>
        <dbReference type="Rhea" id="RHEA:13017"/>
        <dbReference type="ChEBI" id="CHEBI:17568"/>
        <dbReference type="ChEBI" id="CHEBI:33019"/>
        <dbReference type="ChEBI" id="CHEBI:57865"/>
        <dbReference type="ChEBI" id="CHEBI:58017"/>
        <dbReference type="EC" id="2.4.2.9"/>
    </reaction>
</comment>
<comment type="cofactor">
    <cofactor evidence="1">
        <name>Mg(2+)</name>
        <dbReference type="ChEBI" id="CHEBI:18420"/>
    </cofactor>
    <text evidence="1">Binds 1 Mg(2+) ion per subunit. The magnesium is bound as Mg-PRPP.</text>
</comment>
<comment type="activity regulation">
    <text evidence="1">Allosterically activated by GTP.</text>
</comment>
<comment type="pathway">
    <text evidence="1">Pyrimidine metabolism; UMP biosynthesis via salvage pathway; UMP from uracil: step 1/1.</text>
</comment>
<comment type="similarity">
    <text evidence="1">Belongs to the UPRTase family.</text>
</comment>
<feature type="chain" id="PRO_1000053669" description="Uracil phosphoribosyltransferase">
    <location>
        <begin position="1"/>
        <end position="209"/>
    </location>
</feature>
<feature type="binding site" evidence="1">
    <location>
        <position position="79"/>
    </location>
    <ligand>
        <name>5-phospho-alpha-D-ribose 1-diphosphate</name>
        <dbReference type="ChEBI" id="CHEBI:58017"/>
    </ligand>
</feature>
<feature type="binding site" evidence="1">
    <location>
        <position position="104"/>
    </location>
    <ligand>
        <name>5-phospho-alpha-D-ribose 1-diphosphate</name>
        <dbReference type="ChEBI" id="CHEBI:58017"/>
    </ligand>
</feature>
<feature type="binding site" evidence="1">
    <location>
        <begin position="131"/>
        <end position="139"/>
    </location>
    <ligand>
        <name>5-phospho-alpha-D-ribose 1-diphosphate</name>
        <dbReference type="ChEBI" id="CHEBI:58017"/>
    </ligand>
</feature>
<feature type="binding site" evidence="1">
    <location>
        <position position="194"/>
    </location>
    <ligand>
        <name>uracil</name>
        <dbReference type="ChEBI" id="CHEBI:17568"/>
    </ligand>
</feature>
<feature type="binding site" evidence="1">
    <location>
        <begin position="199"/>
        <end position="201"/>
    </location>
    <ligand>
        <name>uracil</name>
        <dbReference type="ChEBI" id="CHEBI:17568"/>
    </ligand>
</feature>
<feature type="binding site" evidence="1">
    <location>
        <position position="200"/>
    </location>
    <ligand>
        <name>5-phospho-alpha-D-ribose 1-diphosphate</name>
        <dbReference type="ChEBI" id="CHEBI:58017"/>
    </ligand>
</feature>
<dbReference type="EC" id="2.4.2.9" evidence="1"/>
<dbReference type="EMBL" id="CP000539">
    <property type="protein sequence ID" value="ABM42073.1"/>
    <property type="molecule type" value="Genomic_DNA"/>
</dbReference>
<dbReference type="SMR" id="A1W748"/>
<dbReference type="STRING" id="232721.Ajs_1893"/>
<dbReference type="KEGG" id="ajs:Ajs_1893"/>
<dbReference type="eggNOG" id="COG0035">
    <property type="taxonomic scope" value="Bacteria"/>
</dbReference>
<dbReference type="HOGENOM" id="CLU_067096_2_2_4"/>
<dbReference type="UniPathway" id="UPA00574">
    <property type="reaction ID" value="UER00636"/>
</dbReference>
<dbReference type="Proteomes" id="UP000000645">
    <property type="component" value="Chromosome"/>
</dbReference>
<dbReference type="GO" id="GO:0005525">
    <property type="term" value="F:GTP binding"/>
    <property type="evidence" value="ECO:0007669"/>
    <property type="project" value="UniProtKB-KW"/>
</dbReference>
<dbReference type="GO" id="GO:0000287">
    <property type="term" value="F:magnesium ion binding"/>
    <property type="evidence" value="ECO:0007669"/>
    <property type="project" value="UniProtKB-UniRule"/>
</dbReference>
<dbReference type="GO" id="GO:0004845">
    <property type="term" value="F:uracil phosphoribosyltransferase activity"/>
    <property type="evidence" value="ECO:0007669"/>
    <property type="project" value="UniProtKB-UniRule"/>
</dbReference>
<dbReference type="GO" id="GO:0044206">
    <property type="term" value="P:UMP salvage"/>
    <property type="evidence" value="ECO:0007669"/>
    <property type="project" value="UniProtKB-UniRule"/>
</dbReference>
<dbReference type="GO" id="GO:0006223">
    <property type="term" value="P:uracil salvage"/>
    <property type="evidence" value="ECO:0007669"/>
    <property type="project" value="InterPro"/>
</dbReference>
<dbReference type="CDD" id="cd06223">
    <property type="entry name" value="PRTases_typeI"/>
    <property type="match status" value="1"/>
</dbReference>
<dbReference type="FunFam" id="3.40.50.2020:FF:000003">
    <property type="entry name" value="Uracil phosphoribosyltransferase"/>
    <property type="match status" value="1"/>
</dbReference>
<dbReference type="Gene3D" id="3.40.50.2020">
    <property type="match status" value="1"/>
</dbReference>
<dbReference type="HAMAP" id="MF_01218_B">
    <property type="entry name" value="Upp_B"/>
    <property type="match status" value="1"/>
</dbReference>
<dbReference type="InterPro" id="IPR000836">
    <property type="entry name" value="PRibTrfase_dom"/>
</dbReference>
<dbReference type="InterPro" id="IPR029057">
    <property type="entry name" value="PRTase-like"/>
</dbReference>
<dbReference type="InterPro" id="IPR034332">
    <property type="entry name" value="Upp_B"/>
</dbReference>
<dbReference type="InterPro" id="IPR050054">
    <property type="entry name" value="UPRTase/APRTase"/>
</dbReference>
<dbReference type="InterPro" id="IPR005765">
    <property type="entry name" value="Ura_phspho_trans"/>
</dbReference>
<dbReference type="NCBIfam" id="NF001097">
    <property type="entry name" value="PRK00129.1"/>
    <property type="match status" value="1"/>
</dbReference>
<dbReference type="NCBIfam" id="TIGR01091">
    <property type="entry name" value="upp"/>
    <property type="match status" value="1"/>
</dbReference>
<dbReference type="PANTHER" id="PTHR32315">
    <property type="entry name" value="ADENINE PHOSPHORIBOSYLTRANSFERASE"/>
    <property type="match status" value="1"/>
</dbReference>
<dbReference type="PANTHER" id="PTHR32315:SF4">
    <property type="entry name" value="URACIL PHOSPHORIBOSYLTRANSFERASE, CHLOROPLASTIC"/>
    <property type="match status" value="1"/>
</dbReference>
<dbReference type="Pfam" id="PF14681">
    <property type="entry name" value="UPRTase"/>
    <property type="match status" value="1"/>
</dbReference>
<dbReference type="SUPFAM" id="SSF53271">
    <property type="entry name" value="PRTase-like"/>
    <property type="match status" value="1"/>
</dbReference>